<gene>
    <name evidence="1" type="primary">ecfA1</name>
    <name type="synonym">cbiO1</name>
    <name type="ordered locus">SAOUHSC_02483</name>
</gene>
<keyword id="KW-0067">ATP-binding</keyword>
<keyword id="KW-1003">Cell membrane</keyword>
<keyword id="KW-0472">Membrane</keyword>
<keyword id="KW-0547">Nucleotide-binding</keyword>
<keyword id="KW-1185">Reference proteome</keyword>
<keyword id="KW-1278">Translocase</keyword>
<keyword id="KW-0813">Transport</keyword>
<reference key="1">
    <citation type="book" date="2006" name="Gram positive pathogens, 2nd edition">
        <title>The Staphylococcus aureus NCTC 8325 genome.</title>
        <editorList>
            <person name="Fischetti V."/>
            <person name="Novick R."/>
            <person name="Ferretti J."/>
            <person name="Portnoy D."/>
            <person name="Rood J."/>
        </editorList>
        <authorList>
            <person name="Gillaspy A.F."/>
            <person name="Worrell V."/>
            <person name="Orvis J."/>
            <person name="Roe B.A."/>
            <person name="Dyer D.W."/>
            <person name="Iandolo J.J."/>
        </authorList>
    </citation>
    <scope>NUCLEOTIDE SEQUENCE [LARGE SCALE GENOMIC DNA]</scope>
    <source>
        <strain>NCTC 8325 / PS 47</strain>
    </source>
</reference>
<organism>
    <name type="scientific">Staphylococcus aureus (strain NCTC 8325 / PS 47)</name>
    <dbReference type="NCBI Taxonomy" id="93061"/>
    <lineage>
        <taxon>Bacteria</taxon>
        <taxon>Bacillati</taxon>
        <taxon>Bacillota</taxon>
        <taxon>Bacilli</taxon>
        <taxon>Bacillales</taxon>
        <taxon>Staphylococcaceae</taxon>
        <taxon>Staphylococcus</taxon>
    </lineage>
</organism>
<protein>
    <recommendedName>
        <fullName evidence="1">Energy-coupling factor transporter ATP-binding protein EcfA1</fullName>
        <shortName evidence="1">ECF transporter A component EcfA1</shortName>
        <ecNumber evidence="1">7.-.-.-</ecNumber>
    </recommendedName>
</protein>
<feature type="chain" id="PRO_0000287984" description="Energy-coupling factor transporter ATP-binding protein EcfA1">
    <location>
        <begin position="1"/>
        <end position="269"/>
    </location>
</feature>
<feature type="domain" description="ABC transporter" evidence="1">
    <location>
        <begin position="8"/>
        <end position="242"/>
    </location>
</feature>
<feature type="binding site" evidence="1">
    <location>
        <begin position="42"/>
        <end position="49"/>
    </location>
    <ligand>
        <name>ATP</name>
        <dbReference type="ChEBI" id="CHEBI:30616"/>
    </ligand>
</feature>
<sequence length="269" mass="30050">MEDKNSVIVFKNVSFQYQSDASFTLKDVSFNIPKGQWTSIVGHNGSGKSTIAKLMIGIEKVKSGEIFYNNQAITDDNFEKLRKDIGIVFQNPDNQFVGSIVKYDVAFGLENHAVPYDEMHRRVSEALKQVDMLERADYEPNALSGGQKQRVAIASVLALNPSVIILDEATSMLDPDARQNLLDLVRKVKSEHNITIISITHDLSEAMEADHVIVMNKGTVYKEGTATEIFDNAEELTRIGLDLPFPIKINQMLGHQTSFLTYEGLVDQL</sequence>
<proteinExistence type="inferred from homology"/>
<comment type="function">
    <text evidence="1">ATP-binding (A) component of a common energy-coupling factor (ECF) ABC-transporter complex. Unlike classic ABC transporters this ECF transporter provides the energy necessary to transport a number of different substrates.</text>
</comment>
<comment type="subunit">
    <text evidence="1">Forms a stable energy-coupling factor (ECF) transporter complex composed of 2 membrane-embedded substrate-binding proteins (S component), 2 ATP-binding proteins (A component) and 2 transmembrane proteins (T component).</text>
</comment>
<comment type="subcellular location">
    <subcellularLocation>
        <location evidence="1">Cell membrane</location>
        <topology evidence="1">Peripheral membrane protein</topology>
    </subcellularLocation>
</comment>
<comment type="similarity">
    <text evidence="1">Belongs to the ABC transporter superfamily. Energy-coupling factor EcfA family.</text>
</comment>
<dbReference type="EC" id="7.-.-.-" evidence="1"/>
<dbReference type="EMBL" id="CP000253">
    <property type="protein sequence ID" value="ABD31502.1"/>
    <property type="molecule type" value="Genomic_DNA"/>
</dbReference>
<dbReference type="RefSeq" id="WP_000389662.1">
    <property type="nucleotide sequence ID" value="NZ_LS483365.1"/>
</dbReference>
<dbReference type="SMR" id="Q2FW34"/>
<dbReference type="STRING" id="93061.SAOUHSC_02483"/>
<dbReference type="PaxDb" id="1280-SAXN108_2472"/>
<dbReference type="KEGG" id="sao:SAOUHSC_02483"/>
<dbReference type="PATRIC" id="fig|93061.5.peg.2239"/>
<dbReference type="eggNOG" id="COG1122">
    <property type="taxonomic scope" value="Bacteria"/>
</dbReference>
<dbReference type="HOGENOM" id="CLU_000604_1_22_9"/>
<dbReference type="OrthoDB" id="9784332at2"/>
<dbReference type="PRO" id="PR:Q2FW34"/>
<dbReference type="Proteomes" id="UP000008816">
    <property type="component" value="Chromosome"/>
</dbReference>
<dbReference type="GO" id="GO:0043190">
    <property type="term" value="C:ATP-binding cassette (ABC) transporter complex"/>
    <property type="evidence" value="ECO:0000318"/>
    <property type="project" value="GO_Central"/>
</dbReference>
<dbReference type="GO" id="GO:0005524">
    <property type="term" value="F:ATP binding"/>
    <property type="evidence" value="ECO:0000318"/>
    <property type="project" value="GO_Central"/>
</dbReference>
<dbReference type="GO" id="GO:0016887">
    <property type="term" value="F:ATP hydrolysis activity"/>
    <property type="evidence" value="ECO:0007669"/>
    <property type="project" value="InterPro"/>
</dbReference>
<dbReference type="GO" id="GO:0042626">
    <property type="term" value="F:ATPase-coupled transmembrane transporter activity"/>
    <property type="evidence" value="ECO:0000318"/>
    <property type="project" value="GO_Central"/>
</dbReference>
<dbReference type="CDD" id="cd03225">
    <property type="entry name" value="ABC_cobalt_CbiO_domain1"/>
    <property type="match status" value="1"/>
</dbReference>
<dbReference type="FunFam" id="3.40.50.300:FF:000224">
    <property type="entry name" value="Energy-coupling factor transporter ATP-binding protein EcfA"/>
    <property type="match status" value="1"/>
</dbReference>
<dbReference type="Gene3D" id="3.40.50.300">
    <property type="entry name" value="P-loop containing nucleotide triphosphate hydrolases"/>
    <property type="match status" value="1"/>
</dbReference>
<dbReference type="InterPro" id="IPR003593">
    <property type="entry name" value="AAA+_ATPase"/>
</dbReference>
<dbReference type="InterPro" id="IPR003439">
    <property type="entry name" value="ABC_transporter-like_ATP-bd"/>
</dbReference>
<dbReference type="InterPro" id="IPR017871">
    <property type="entry name" value="ABC_transporter-like_CS"/>
</dbReference>
<dbReference type="InterPro" id="IPR015856">
    <property type="entry name" value="ABC_transpr_CbiO/EcfA_su"/>
</dbReference>
<dbReference type="InterPro" id="IPR050095">
    <property type="entry name" value="ECF_ABC_transporter_ATP-bd"/>
</dbReference>
<dbReference type="InterPro" id="IPR030947">
    <property type="entry name" value="EcfA_1"/>
</dbReference>
<dbReference type="InterPro" id="IPR027417">
    <property type="entry name" value="P-loop_NTPase"/>
</dbReference>
<dbReference type="NCBIfam" id="TIGR04520">
    <property type="entry name" value="ECF_ATPase_1"/>
    <property type="match status" value="1"/>
</dbReference>
<dbReference type="NCBIfam" id="NF010167">
    <property type="entry name" value="PRK13648.1"/>
    <property type="match status" value="1"/>
</dbReference>
<dbReference type="PANTHER" id="PTHR43553:SF24">
    <property type="entry name" value="ENERGY-COUPLING FACTOR TRANSPORTER ATP-BINDING PROTEIN ECFA1"/>
    <property type="match status" value="1"/>
</dbReference>
<dbReference type="PANTHER" id="PTHR43553">
    <property type="entry name" value="HEAVY METAL TRANSPORTER"/>
    <property type="match status" value="1"/>
</dbReference>
<dbReference type="Pfam" id="PF00005">
    <property type="entry name" value="ABC_tran"/>
    <property type="match status" value="1"/>
</dbReference>
<dbReference type="SMART" id="SM00382">
    <property type="entry name" value="AAA"/>
    <property type="match status" value="1"/>
</dbReference>
<dbReference type="SUPFAM" id="SSF52540">
    <property type="entry name" value="P-loop containing nucleoside triphosphate hydrolases"/>
    <property type="match status" value="1"/>
</dbReference>
<dbReference type="PROSITE" id="PS00211">
    <property type="entry name" value="ABC_TRANSPORTER_1"/>
    <property type="match status" value="1"/>
</dbReference>
<dbReference type="PROSITE" id="PS50893">
    <property type="entry name" value="ABC_TRANSPORTER_2"/>
    <property type="match status" value="1"/>
</dbReference>
<dbReference type="PROSITE" id="PS51246">
    <property type="entry name" value="CBIO"/>
    <property type="match status" value="1"/>
</dbReference>
<evidence type="ECO:0000255" key="1">
    <source>
        <dbReference type="HAMAP-Rule" id="MF_01710"/>
    </source>
</evidence>
<accession>Q2FW34</accession>
<name>ECFA1_STAA8</name>